<accession>Q92ZW9</accession>
<gene>
    <name evidence="1" type="primary">aqpZ2</name>
    <name type="ordered locus">RA0329</name>
    <name type="ORF">SMa0627</name>
</gene>
<evidence type="ECO:0000255" key="1">
    <source>
        <dbReference type="HAMAP-Rule" id="MF_01146"/>
    </source>
</evidence>
<evidence type="ECO:0000305" key="2"/>
<proteinExistence type="inferred from homology"/>
<organism>
    <name type="scientific">Rhizobium meliloti (strain 1021)</name>
    <name type="common">Ensifer meliloti</name>
    <name type="synonym">Sinorhizobium meliloti</name>
    <dbReference type="NCBI Taxonomy" id="266834"/>
    <lineage>
        <taxon>Bacteria</taxon>
        <taxon>Pseudomonadati</taxon>
        <taxon>Pseudomonadota</taxon>
        <taxon>Alphaproteobacteria</taxon>
        <taxon>Hyphomicrobiales</taxon>
        <taxon>Rhizobiaceae</taxon>
        <taxon>Sinorhizobium/Ensifer group</taxon>
        <taxon>Sinorhizobium</taxon>
    </lineage>
</organism>
<feature type="chain" id="PRO_0000063997" description="Aquaporin Z 2">
    <location>
        <begin position="1"/>
        <end position="232"/>
    </location>
</feature>
<feature type="transmembrane region" description="Helical" evidence="1">
    <location>
        <begin position="9"/>
        <end position="29"/>
    </location>
</feature>
<feature type="transmembrane region" description="Helical" evidence="1">
    <location>
        <begin position="32"/>
        <end position="52"/>
    </location>
</feature>
<feature type="transmembrane region" description="Helical" evidence="1">
    <location>
        <begin position="82"/>
        <end position="102"/>
    </location>
</feature>
<feature type="transmembrane region" description="Helical" evidence="1">
    <location>
        <begin position="129"/>
        <end position="149"/>
    </location>
</feature>
<feature type="transmembrane region" description="Helical" evidence="1">
    <location>
        <begin position="158"/>
        <end position="178"/>
    </location>
</feature>
<feature type="transmembrane region" description="Helical" evidence="1">
    <location>
        <begin position="200"/>
        <end position="220"/>
    </location>
</feature>
<feature type="short sequence motif" description="NPA 1" evidence="1">
    <location>
        <begin position="63"/>
        <end position="65"/>
    </location>
</feature>
<feature type="short sequence motif" description="NPA 2" evidence="1">
    <location>
        <begin position="184"/>
        <end position="186"/>
    </location>
</feature>
<feature type="site" description="Involved in tetramerization or stability of the tetramer" evidence="1">
    <location>
        <position position="20"/>
    </location>
</feature>
<feature type="site" description="Selectivity filter" evidence="1">
    <location>
        <position position="43"/>
    </location>
</feature>
<feature type="site" description="Selectivity filter" evidence="1">
    <location>
        <position position="172"/>
    </location>
</feature>
<feature type="site" description="Selectivity filter" evidence="1">
    <location>
        <position position="181"/>
    </location>
</feature>
<feature type="site" description="Selectivity filter" evidence="1">
    <location>
        <position position="187"/>
    </location>
</feature>
<name>AQPZ2_RHIME</name>
<comment type="function">
    <text evidence="1">Channel that permits osmotically driven movement of water in both directions. It is involved in the osmoregulation and in the maintenance of cell turgor during volume expansion in rapidly growing cells. It mediates rapid entry or exit of water in response to abrupt changes in osmolarity.</text>
</comment>
<comment type="catalytic activity">
    <reaction evidence="1">
        <text>H2O(in) = H2O(out)</text>
        <dbReference type="Rhea" id="RHEA:29667"/>
        <dbReference type="ChEBI" id="CHEBI:15377"/>
    </reaction>
    <physiologicalReaction direction="left-to-right" evidence="1">
        <dbReference type="Rhea" id="RHEA:29668"/>
    </physiologicalReaction>
    <physiologicalReaction direction="right-to-left" evidence="1">
        <dbReference type="Rhea" id="RHEA:29669"/>
    </physiologicalReaction>
</comment>
<comment type="subunit">
    <text evidence="1">Homotetramer.</text>
</comment>
<comment type="subcellular location">
    <subcellularLocation>
        <location evidence="1">Cell inner membrane</location>
        <topology evidence="1">Multi-pass membrane protein</topology>
    </subcellularLocation>
</comment>
<comment type="domain">
    <text evidence="1">Aquaporins contain two tandem repeats each containing three membrane-spanning domains and a pore-forming loop with the signature motif Asn-Pro-Ala (NPA).</text>
</comment>
<comment type="similarity">
    <text evidence="1 2">Belongs to the MIP/aquaporin (TC 1.A.8) family.</text>
</comment>
<sequence length="232" mass="23789">MFKKLCAEFLGTCWLVLGGCGSAVLASAFPQVGIGLLGVSFAFGLTVLTMAYTVGGISGGHFNPAVSLGLAVAGRVPAASLVSYVIAQVAGAIIAAAVLYVIATGKADFQLGSFAANGYGEHSPGGYSLTAALVTEVVMTFFFLIIILGSTHRRVPAGFAPIAIGLALTLIHLVSIPVTNTSVNPARSTGQALFVGGWALSQLWLFWIAPLFGAAIAGIVWKSVGEEFRPVD</sequence>
<keyword id="KW-0997">Cell inner membrane</keyword>
<keyword id="KW-1003">Cell membrane</keyword>
<keyword id="KW-0472">Membrane</keyword>
<keyword id="KW-0614">Plasmid</keyword>
<keyword id="KW-1185">Reference proteome</keyword>
<keyword id="KW-0677">Repeat</keyword>
<keyword id="KW-0812">Transmembrane</keyword>
<keyword id="KW-1133">Transmembrane helix</keyword>
<keyword id="KW-0813">Transport</keyword>
<geneLocation type="plasmid">
    <name>pSymA</name>
    <name>megaplasmid 1</name>
</geneLocation>
<protein>
    <recommendedName>
        <fullName evidence="1">Aquaporin Z 2</fullName>
    </recommendedName>
</protein>
<reference key="1">
    <citation type="journal article" date="2001" name="Proc. Natl. Acad. Sci. U.S.A.">
        <title>Nucleotide sequence and predicted functions of the entire Sinorhizobium meliloti pSymA megaplasmid.</title>
        <authorList>
            <person name="Barnett M.J."/>
            <person name="Fisher R.F."/>
            <person name="Jones T."/>
            <person name="Komp C."/>
            <person name="Abola A.P."/>
            <person name="Barloy-Hubler F."/>
            <person name="Bowser L."/>
            <person name="Capela D."/>
            <person name="Galibert F."/>
            <person name="Gouzy J."/>
            <person name="Gurjal M."/>
            <person name="Hong A."/>
            <person name="Huizar L."/>
            <person name="Hyman R.W."/>
            <person name="Kahn D."/>
            <person name="Kahn M.L."/>
            <person name="Kalman S."/>
            <person name="Keating D.H."/>
            <person name="Palm C."/>
            <person name="Peck M.C."/>
            <person name="Surzycki R."/>
            <person name="Wells D.H."/>
            <person name="Yeh K.-C."/>
            <person name="Davis R.W."/>
            <person name="Federspiel N.A."/>
            <person name="Long S.R."/>
        </authorList>
    </citation>
    <scope>NUCLEOTIDE SEQUENCE [LARGE SCALE GENOMIC DNA]</scope>
    <source>
        <strain>1021</strain>
    </source>
</reference>
<reference key="2">
    <citation type="journal article" date="2001" name="Science">
        <title>The composite genome of the legume symbiont Sinorhizobium meliloti.</title>
        <authorList>
            <person name="Galibert F."/>
            <person name="Finan T.M."/>
            <person name="Long S.R."/>
            <person name="Puehler A."/>
            <person name="Abola P."/>
            <person name="Ampe F."/>
            <person name="Barloy-Hubler F."/>
            <person name="Barnett M.J."/>
            <person name="Becker A."/>
            <person name="Boistard P."/>
            <person name="Bothe G."/>
            <person name="Boutry M."/>
            <person name="Bowser L."/>
            <person name="Buhrmester J."/>
            <person name="Cadieu E."/>
            <person name="Capela D."/>
            <person name="Chain P."/>
            <person name="Cowie A."/>
            <person name="Davis R.W."/>
            <person name="Dreano S."/>
            <person name="Federspiel N.A."/>
            <person name="Fisher R.F."/>
            <person name="Gloux S."/>
            <person name="Godrie T."/>
            <person name="Goffeau A."/>
            <person name="Golding B."/>
            <person name="Gouzy J."/>
            <person name="Gurjal M."/>
            <person name="Hernandez-Lucas I."/>
            <person name="Hong A."/>
            <person name="Huizar L."/>
            <person name="Hyman R.W."/>
            <person name="Jones T."/>
            <person name="Kahn D."/>
            <person name="Kahn M.L."/>
            <person name="Kalman S."/>
            <person name="Keating D.H."/>
            <person name="Kiss E."/>
            <person name="Komp C."/>
            <person name="Lelaure V."/>
            <person name="Masuy D."/>
            <person name="Palm C."/>
            <person name="Peck M.C."/>
            <person name="Pohl T.M."/>
            <person name="Portetelle D."/>
            <person name="Purnelle B."/>
            <person name="Ramsperger U."/>
            <person name="Surzycki R."/>
            <person name="Thebault P."/>
            <person name="Vandenbol M."/>
            <person name="Vorhoelter F.J."/>
            <person name="Weidner S."/>
            <person name="Wells D.H."/>
            <person name="Wong K."/>
            <person name="Yeh K.-C."/>
            <person name="Batut J."/>
        </authorList>
    </citation>
    <scope>NUCLEOTIDE SEQUENCE [LARGE SCALE GENOMIC DNA]</scope>
    <source>
        <strain>1021</strain>
    </source>
</reference>
<dbReference type="EMBL" id="AE006469">
    <property type="protein sequence ID" value="AAK64987.1"/>
    <property type="molecule type" value="Genomic_DNA"/>
</dbReference>
<dbReference type="PIR" id="A95303">
    <property type="entry name" value="A95303"/>
</dbReference>
<dbReference type="RefSeq" id="NP_435575.1">
    <property type="nucleotide sequence ID" value="NC_003037.1"/>
</dbReference>
<dbReference type="SMR" id="Q92ZW9"/>
<dbReference type="EnsemblBacteria" id="AAK64987">
    <property type="protein sequence ID" value="AAK64987"/>
    <property type="gene ID" value="SMa0627"/>
</dbReference>
<dbReference type="KEGG" id="sme:SMa0627"/>
<dbReference type="PATRIC" id="fig|266834.11.peg.347"/>
<dbReference type="HOGENOM" id="CLU_020019_3_2_5"/>
<dbReference type="OrthoDB" id="9807293at2"/>
<dbReference type="Proteomes" id="UP000001976">
    <property type="component" value="Plasmid pSymA"/>
</dbReference>
<dbReference type="GO" id="GO:0005886">
    <property type="term" value="C:plasma membrane"/>
    <property type="evidence" value="ECO:0007669"/>
    <property type="project" value="UniProtKB-SubCell"/>
</dbReference>
<dbReference type="GO" id="GO:0015250">
    <property type="term" value="F:water channel activity"/>
    <property type="evidence" value="ECO:0007669"/>
    <property type="project" value="UniProtKB-UniRule"/>
</dbReference>
<dbReference type="FunFam" id="1.20.1080.10:FF:000007">
    <property type="entry name" value="Aquaporin Z"/>
    <property type="match status" value="1"/>
</dbReference>
<dbReference type="Gene3D" id="1.20.1080.10">
    <property type="entry name" value="Glycerol uptake facilitator protein"/>
    <property type="match status" value="1"/>
</dbReference>
<dbReference type="HAMAP" id="MF_01146">
    <property type="entry name" value="Aquaporin_Z"/>
    <property type="match status" value="1"/>
</dbReference>
<dbReference type="InterPro" id="IPR023271">
    <property type="entry name" value="Aquaporin-like"/>
</dbReference>
<dbReference type="InterPro" id="IPR034294">
    <property type="entry name" value="Aquaporin_transptr"/>
</dbReference>
<dbReference type="InterPro" id="IPR023743">
    <property type="entry name" value="Aquaporin_Z"/>
</dbReference>
<dbReference type="InterPro" id="IPR000425">
    <property type="entry name" value="MIP"/>
</dbReference>
<dbReference type="InterPro" id="IPR022357">
    <property type="entry name" value="MIP_CS"/>
</dbReference>
<dbReference type="NCBIfam" id="TIGR00861">
    <property type="entry name" value="MIP"/>
    <property type="match status" value="1"/>
</dbReference>
<dbReference type="NCBIfam" id="NF003838">
    <property type="entry name" value="PRK05420.1"/>
    <property type="match status" value="1"/>
</dbReference>
<dbReference type="PANTHER" id="PTHR19139">
    <property type="entry name" value="AQUAPORIN TRANSPORTER"/>
    <property type="match status" value="1"/>
</dbReference>
<dbReference type="PANTHER" id="PTHR19139:SF199">
    <property type="entry name" value="MIP17260P"/>
    <property type="match status" value="1"/>
</dbReference>
<dbReference type="Pfam" id="PF00230">
    <property type="entry name" value="MIP"/>
    <property type="match status" value="1"/>
</dbReference>
<dbReference type="PRINTS" id="PR00783">
    <property type="entry name" value="MINTRINSICP"/>
</dbReference>
<dbReference type="SUPFAM" id="SSF81338">
    <property type="entry name" value="Aquaporin-like"/>
    <property type="match status" value="1"/>
</dbReference>
<dbReference type="PROSITE" id="PS00221">
    <property type="entry name" value="MIP"/>
    <property type="match status" value="1"/>
</dbReference>